<proteinExistence type="inferred from homology"/>
<gene>
    <name evidence="1" type="primary">rbfA</name>
    <name type="ordered locus">PCC7424_1869</name>
</gene>
<feature type="chain" id="PRO_1000193246" description="Ribosome-binding factor A">
    <location>
        <begin position="1"/>
        <end position="131"/>
    </location>
</feature>
<evidence type="ECO:0000255" key="1">
    <source>
        <dbReference type="HAMAP-Rule" id="MF_00003"/>
    </source>
</evidence>
<protein>
    <recommendedName>
        <fullName evidence="1">Ribosome-binding factor A</fullName>
    </recommendedName>
</protein>
<name>RBFA_GLOC7</name>
<organism>
    <name type="scientific">Gloeothece citriformis (strain PCC 7424)</name>
    <name type="common">Cyanothece sp. (strain PCC 7424)</name>
    <dbReference type="NCBI Taxonomy" id="65393"/>
    <lineage>
        <taxon>Bacteria</taxon>
        <taxon>Bacillati</taxon>
        <taxon>Cyanobacteriota</taxon>
        <taxon>Cyanophyceae</taxon>
        <taxon>Oscillatoriophycideae</taxon>
        <taxon>Chroococcales</taxon>
        <taxon>Aphanothecaceae</taxon>
        <taxon>Gloeothece</taxon>
        <taxon>Gloeothece citriformis</taxon>
    </lineage>
</organism>
<keyword id="KW-0963">Cytoplasm</keyword>
<keyword id="KW-1185">Reference proteome</keyword>
<keyword id="KW-0690">Ribosome biogenesis</keyword>
<accession>B7KDJ9</accession>
<comment type="function">
    <text evidence="1">One of several proteins that assist in the late maturation steps of the functional core of the 30S ribosomal subunit. Associates with free 30S ribosomal subunits (but not with 30S subunits that are part of 70S ribosomes or polysomes). Required for efficient processing of 16S rRNA. May interact with the 5'-terminal helix region of 16S rRNA.</text>
</comment>
<comment type="subunit">
    <text evidence="1">Monomer. Binds 30S ribosomal subunits, but not 50S ribosomal subunits or 70S ribosomes.</text>
</comment>
<comment type="subcellular location">
    <subcellularLocation>
        <location evidence="1">Cytoplasm</location>
    </subcellularLocation>
</comment>
<comment type="similarity">
    <text evidence="1">Belongs to the RbfA family.</text>
</comment>
<sequence>MATDRRVSRVSSLIKREVSQMLLHGIKDDRVGAGMVSITDVDVSGDLQHAKIFVSIYGTEQAKAETMEGLKSSVGFVRRELGQRIRLRRTPEVVFLEDTSLERGDRTLHLLNQLQDARKEEDEYIEPAQDD</sequence>
<reference key="1">
    <citation type="journal article" date="2011" name="MBio">
        <title>Novel metabolic attributes of the genus Cyanothece, comprising a group of unicellular nitrogen-fixing Cyanobacteria.</title>
        <authorList>
            <person name="Bandyopadhyay A."/>
            <person name="Elvitigala T."/>
            <person name="Welsh E."/>
            <person name="Stockel J."/>
            <person name="Liberton M."/>
            <person name="Min H."/>
            <person name="Sherman L.A."/>
            <person name="Pakrasi H.B."/>
        </authorList>
    </citation>
    <scope>NUCLEOTIDE SEQUENCE [LARGE SCALE GENOMIC DNA]</scope>
    <source>
        <strain>PCC 7424</strain>
    </source>
</reference>
<dbReference type="EMBL" id="CP001291">
    <property type="protein sequence ID" value="ACK70301.1"/>
    <property type="molecule type" value="Genomic_DNA"/>
</dbReference>
<dbReference type="RefSeq" id="WP_012599244.1">
    <property type="nucleotide sequence ID" value="NC_011729.1"/>
</dbReference>
<dbReference type="SMR" id="B7KDJ9"/>
<dbReference type="STRING" id="65393.PCC7424_1869"/>
<dbReference type="KEGG" id="cyc:PCC7424_1869"/>
<dbReference type="eggNOG" id="COG0858">
    <property type="taxonomic scope" value="Bacteria"/>
</dbReference>
<dbReference type="HOGENOM" id="CLU_089475_2_1_3"/>
<dbReference type="OrthoDB" id="307788at2"/>
<dbReference type="Proteomes" id="UP000002384">
    <property type="component" value="Chromosome"/>
</dbReference>
<dbReference type="GO" id="GO:0005829">
    <property type="term" value="C:cytosol"/>
    <property type="evidence" value="ECO:0007669"/>
    <property type="project" value="TreeGrafter"/>
</dbReference>
<dbReference type="GO" id="GO:0043024">
    <property type="term" value="F:ribosomal small subunit binding"/>
    <property type="evidence" value="ECO:0007669"/>
    <property type="project" value="TreeGrafter"/>
</dbReference>
<dbReference type="GO" id="GO:0030490">
    <property type="term" value="P:maturation of SSU-rRNA"/>
    <property type="evidence" value="ECO:0007669"/>
    <property type="project" value="UniProtKB-UniRule"/>
</dbReference>
<dbReference type="Gene3D" id="3.30.300.20">
    <property type="match status" value="1"/>
</dbReference>
<dbReference type="HAMAP" id="MF_00003">
    <property type="entry name" value="RbfA"/>
    <property type="match status" value="1"/>
</dbReference>
<dbReference type="InterPro" id="IPR015946">
    <property type="entry name" value="KH_dom-like_a/b"/>
</dbReference>
<dbReference type="InterPro" id="IPR000238">
    <property type="entry name" value="RbfA"/>
</dbReference>
<dbReference type="InterPro" id="IPR023799">
    <property type="entry name" value="RbfA_dom_sf"/>
</dbReference>
<dbReference type="InterPro" id="IPR020053">
    <property type="entry name" value="Ribosome-bd_factorA_CS"/>
</dbReference>
<dbReference type="NCBIfam" id="TIGR00082">
    <property type="entry name" value="rbfA"/>
    <property type="match status" value="1"/>
</dbReference>
<dbReference type="PANTHER" id="PTHR33515">
    <property type="entry name" value="RIBOSOME-BINDING FACTOR A, CHLOROPLASTIC-RELATED"/>
    <property type="match status" value="1"/>
</dbReference>
<dbReference type="PANTHER" id="PTHR33515:SF1">
    <property type="entry name" value="RIBOSOME-BINDING FACTOR A, CHLOROPLASTIC-RELATED"/>
    <property type="match status" value="1"/>
</dbReference>
<dbReference type="Pfam" id="PF02033">
    <property type="entry name" value="RBFA"/>
    <property type="match status" value="1"/>
</dbReference>
<dbReference type="SUPFAM" id="SSF89919">
    <property type="entry name" value="Ribosome-binding factor A, RbfA"/>
    <property type="match status" value="1"/>
</dbReference>
<dbReference type="PROSITE" id="PS01319">
    <property type="entry name" value="RBFA"/>
    <property type="match status" value="1"/>
</dbReference>